<proteinExistence type="inferred from homology"/>
<dbReference type="EC" id="2.5.1.75" evidence="1"/>
<dbReference type="EMBL" id="CP001055">
    <property type="protein sequence ID" value="ACC98665.1"/>
    <property type="molecule type" value="Genomic_DNA"/>
</dbReference>
<dbReference type="RefSeq" id="WP_012415280.1">
    <property type="nucleotide sequence ID" value="NC_010644.1"/>
</dbReference>
<dbReference type="SMR" id="B2KDR9"/>
<dbReference type="STRING" id="445932.Emin_1113"/>
<dbReference type="KEGG" id="emi:Emin_1113"/>
<dbReference type="HOGENOM" id="CLU_032616_0_1_0"/>
<dbReference type="OrthoDB" id="9776390at2"/>
<dbReference type="Proteomes" id="UP000001029">
    <property type="component" value="Chromosome"/>
</dbReference>
<dbReference type="GO" id="GO:0005524">
    <property type="term" value="F:ATP binding"/>
    <property type="evidence" value="ECO:0007669"/>
    <property type="project" value="UniProtKB-UniRule"/>
</dbReference>
<dbReference type="GO" id="GO:0052381">
    <property type="term" value="F:tRNA dimethylallyltransferase activity"/>
    <property type="evidence" value="ECO:0007669"/>
    <property type="project" value="UniProtKB-UniRule"/>
</dbReference>
<dbReference type="GO" id="GO:0006400">
    <property type="term" value="P:tRNA modification"/>
    <property type="evidence" value="ECO:0007669"/>
    <property type="project" value="TreeGrafter"/>
</dbReference>
<dbReference type="Gene3D" id="1.10.20.140">
    <property type="match status" value="1"/>
</dbReference>
<dbReference type="Gene3D" id="3.40.50.300">
    <property type="entry name" value="P-loop containing nucleotide triphosphate hydrolases"/>
    <property type="match status" value="1"/>
</dbReference>
<dbReference type="HAMAP" id="MF_00185">
    <property type="entry name" value="IPP_trans"/>
    <property type="match status" value="1"/>
</dbReference>
<dbReference type="InterPro" id="IPR039657">
    <property type="entry name" value="Dimethylallyltransferase"/>
</dbReference>
<dbReference type="InterPro" id="IPR018022">
    <property type="entry name" value="IPT"/>
</dbReference>
<dbReference type="InterPro" id="IPR027417">
    <property type="entry name" value="P-loop_NTPase"/>
</dbReference>
<dbReference type="NCBIfam" id="TIGR00174">
    <property type="entry name" value="miaA"/>
    <property type="match status" value="1"/>
</dbReference>
<dbReference type="PANTHER" id="PTHR11088">
    <property type="entry name" value="TRNA DIMETHYLALLYLTRANSFERASE"/>
    <property type="match status" value="1"/>
</dbReference>
<dbReference type="PANTHER" id="PTHR11088:SF60">
    <property type="entry name" value="TRNA DIMETHYLALLYLTRANSFERASE"/>
    <property type="match status" value="1"/>
</dbReference>
<dbReference type="Pfam" id="PF01715">
    <property type="entry name" value="IPPT"/>
    <property type="match status" value="1"/>
</dbReference>
<dbReference type="SUPFAM" id="SSF52540">
    <property type="entry name" value="P-loop containing nucleoside triphosphate hydrolases"/>
    <property type="match status" value="2"/>
</dbReference>
<organism>
    <name type="scientific">Elusimicrobium minutum (strain Pei191)</name>
    <dbReference type="NCBI Taxonomy" id="445932"/>
    <lineage>
        <taxon>Bacteria</taxon>
        <taxon>Pseudomonadati</taxon>
        <taxon>Elusimicrobiota</taxon>
        <taxon>Elusimicrobia</taxon>
        <taxon>Elusimicrobiales</taxon>
        <taxon>Elusimicrobiaceae</taxon>
        <taxon>Elusimicrobium</taxon>
    </lineage>
</organism>
<gene>
    <name evidence="1" type="primary">miaA</name>
    <name type="ordered locus">Emin_1113</name>
</gene>
<accession>B2KDR9</accession>
<keyword id="KW-0067">ATP-binding</keyword>
<keyword id="KW-0460">Magnesium</keyword>
<keyword id="KW-0547">Nucleotide-binding</keyword>
<keyword id="KW-1185">Reference proteome</keyword>
<keyword id="KW-0808">Transferase</keyword>
<keyword id="KW-0819">tRNA processing</keyword>
<name>MIAA_ELUMP</name>
<comment type="function">
    <text evidence="1">Catalyzes the transfer of a dimethylallyl group onto the adenine at position 37 in tRNAs that read codons beginning with uridine, leading to the formation of N6-(dimethylallyl)adenosine (i(6)A).</text>
</comment>
<comment type="catalytic activity">
    <reaction evidence="1">
        <text>adenosine(37) in tRNA + dimethylallyl diphosphate = N(6)-dimethylallyladenosine(37) in tRNA + diphosphate</text>
        <dbReference type="Rhea" id="RHEA:26482"/>
        <dbReference type="Rhea" id="RHEA-COMP:10162"/>
        <dbReference type="Rhea" id="RHEA-COMP:10375"/>
        <dbReference type="ChEBI" id="CHEBI:33019"/>
        <dbReference type="ChEBI" id="CHEBI:57623"/>
        <dbReference type="ChEBI" id="CHEBI:74411"/>
        <dbReference type="ChEBI" id="CHEBI:74415"/>
        <dbReference type="EC" id="2.5.1.75"/>
    </reaction>
</comment>
<comment type="cofactor">
    <cofactor evidence="1">
        <name>Mg(2+)</name>
        <dbReference type="ChEBI" id="CHEBI:18420"/>
    </cofactor>
</comment>
<comment type="subunit">
    <text evidence="1">Monomer.</text>
</comment>
<comment type="similarity">
    <text evidence="1">Belongs to the IPP transferase family.</text>
</comment>
<protein>
    <recommendedName>
        <fullName evidence="1">tRNA dimethylallyltransferase</fullName>
        <ecNumber evidence="1">2.5.1.75</ecNumber>
    </recommendedName>
    <alternativeName>
        <fullName evidence="1">Dimethylallyl diphosphate:tRNA dimethylallyltransferase</fullName>
        <shortName evidence="1">DMAPP:tRNA dimethylallyltransferase</shortName>
        <shortName evidence="1">DMATase</shortName>
    </alternativeName>
    <alternativeName>
        <fullName evidence="1">Isopentenyl-diphosphate:tRNA isopentenyltransferase</fullName>
        <shortName evidence="1">IPP transferase</shortName>
        <shortName evidence="1">IPPT</shortName>
        <shortName evidence="1">IPTase</shortName>
    </alternativeName>
</protein>
<feature type="chain" id="PRO_0000377155" description="tRNA dimethylallyltransferase">
    <location>
        <begin position="1"/>
        <end position="307"/>
    </location>
</feature>
<feature type="region of interest" description="Interaction with substrate tRNA" evidence="1">
    <location>
        <begin position="32"/>
        <end position="35"/>
    </location>
</feature>
<feature type="binding site" evidence="1">
    <location>
        <begin position="7"/>
        <end position="14"/>
    </location>
    <ligand>
        <name>ATP</name>
        <dbReference type="ChEBI" id="CHEBI:30616"/>
    </ligand>
</feature>
<feature type="binding site" evidence="1">
    <location>
        <begin position="9"/>
        <end position="14"/>
    </location>
    <ligand>
        <name>substrate</name>
    </ligand>
</feature>
<feature type="site" description="Interaction with substrate tRNA" evidence="1">
    <location>
        <position position="104"/>
    </location>
</feature>
<feature type="site" description="Interaction with substrate tRNA" evidence="1">
    <location>
        <position position="126"/>
    </location>
</feature>
<evidence type="ECO:0000255" key="1">
    <source>
        <dbReference type="HAMAP-Rule" id="MF_00185"/>
    </source>
</evidence>
<sequence>MTIIIAGPTAGGKTDLALNLAKLIGGEVVSVDSRQVYKYLTVGTAKPEGEYKNGVYNVDGVNYHLVDFLDLDKTYNTGSFTADASNTAYNINKKGKTAIFAGGTGMYMQSYFGGMDVLPKADQALRAQLADIADKEGKQSLHKMLSEADPESAALIPSGNLHRVMRALEIFKLTGKKASELRTNGFADISQNNFMVYIEWDKEELNKRIEIRTQGMFGGMLKETQDMLAKGYTRNSPGLRSLGYAEVIDFIEGKKTKPEALERIVILTRQYAKRQRTWFARYKNMYKADGSALNAEQILAEYAAWKK</sequence>
<reference key="1">
    <citation type="journal article" date="2009" name="Appl. Environ. Microbiol.">
        <title>Genomic analysis of 'Elusimicrobium minutum,' the first cultivated representative of the phylum 'Elusimicrobia' (formerly termite group 1).</title>
        <authorList>
            <person name="Herlemann D.P.R."/>
            <person name="Geissinger O."/>
            <person name="Ikeda-Ohtsubo W."/>
            <person name="Kunin V."/>
            <person name="Sun H."/>
            <person name="Lapidus A."/>
            <person name="Hugenholtz P."/>
            <person name="Brune A."/>
        </authorList>
    </citation>
    <scope>NUCLEOTIDE SEQUENCE [LARGE SCALE GENOMIC DNA]</scope>
    <source>
        <strain>Pei191</strain>
    </source>
</reference>